<name>LIF_NEOVI</name>
<sequence length="202" mass="22114">MKVLAAGVVPLLLVLHWKHGAGTPLPITPVNATCATRHPCHSNLMNQIRNQLAHVNGSANALFILYYTAQGEPFPNNLDKLCGPNVTDFPPFHRNGTEKTRLVELYRIIAYLGASLGNITRDQKVLNPNALSLHSKLKATADILRGLLSNVLCRLCNKYHVAHVDVAYGPDTSGKDVFQKKKLGCQLLGKYKQVIAVVAQAF</sequence>
<evidence type="ECO:0000250" key="1"/>
<evidence type="ECO:0000255" key="2"/>
<evidence type="ECO:0000305" key="3"/>
<keyword id="KW-0202">Cytokine</keyword>
<keyword id="KW-1015">Disulfide bond</keyword>
<keyword id="KW-0325">Glycoprotein</keyword>
<keyword id="KW-0339">Growth factor</keyword>
<keyword id="KW-1185">Reference proteome</keyword>
<keyword id="KW-0964">Secreted</keyword>
<keyword id="KW-0732">Signal</keyword>
<dbReference type="EMBL" id="AF048827">
    <property type="protein sequence ID" value="AAC05638.1"/>
    <property type="molecule type" value="mRNA"/>
</dbReference>
<dbReference type="SMR" id="O62728"/>
<dbReference type="GlyCosmos" id="O62728">
    <property type="glycosylation" value="5 sites, No reported glycans"/>
</dbReference>
<dbReference type="Proteomes" id="UP000694425">
    <property type="component" value="Unplaced"/>
</dbReference>
<dbReference type="GO" id="GO:0005615">
    <property type="term" value="C:extracellular space"/>
    <property type="evidence" value="ECO:0007669"/>
    <property type="project" value="UniProtKB-KW"/>
</dbReference>
<dbReference type="GO" id="GO:0005125">
    <property type="term" value="F:cytokine activity"/>
    <property type="evidence" value="ECO:0007669"/>
    <property type="project" value="UniProtKB-KW"/>
</dbReference>
<dbReference type="GO" id="GO:0008083">
    <property type="term" value="F:growth factor activity"/>
    <property type="evidence" value="ECO:0007669"/>
    <property type="project" value="UniProtKB-KW"/>
</dbReference>
<dbReference type="GO" id="GO:0005146">
    <property type="term" value="F:leukemia inhibitory factor receptor binding"/>
    <property type="evidence" value="ECO:0007669"/>
    <property type="project" value="InterPro"/>
</dbReference>
<dbReference type="GO" id="GO:0006955">
    <property type="term" value="P:immune response"/>
    <property type="evidence" value="ECO:0007669"/>
    <property type="project" value="InterPro"/>
</dbReference>
<dbReference type="GO" id="GO:0048861">
    <property type="term" value="P:leukemia inhibitory factor signaling pathway"/>
    <property type="evidence" value="ECO:0007669"/>
    <property type="project" value="TreeGrafter"/>
</dbReference>
<dbReference type="GO" id="GO:0008284">
    <property type="term" value="P:positive regulation of cell population proliferation"/>
    <property type="evidence" value="ECO:0007669"/>
    <property type="project" value="TreeGrafter"/>
</dbReference>
<dbReference type="GO" id="GO:0010646">
    <property type="term" value="P:regulation of cell communication"/>
    <property type="evidence" value="ECO:0007669"/>
    <property type="project" value="UniProtKB-ARBA"/>
</dbReference>
<dbReference type="GO" id="GO:0045595">
    <property type="term" value="P:regulation of cell differentiation"/>
    <property type="evidence" value="ECO:0007669"/>
    <property type="project" value="TreeGrafter"/>
</dbReference>
<dbReference type="GO" id="GO:0023051">
    <property type="term" value="P:regulation of signaling"/>
    <property type="evidence" value="ECO:0007669"/>
    <property type="project" value="UniProtKB-ARBA"/>
</dbReference>
<dbReference type="FunFam" id="1.20.1250.10:FF:000018">
    <property type="entry name" value="leukemia inhibitory factor"/>
    <property type="match status" value="1"/>
</dbReference>
<dbReference type="Gene3D" id="1.20.1250.10">
    <property type="match status" value="1"/>
</dbReference>
<dbReference type="InterPro" id="IPR009079">
    <property type="entry name" value="4_helix_cytokine-like_core"/>
</dbReference>
<dbReference type="InterPro" id="IPR003624">
    <property type="entry name" value="Leukemia_IF"/>
</dbReference>
<dbReference type="InterPro" id="IPR001581">
    <property type="entry name" value="Leukemia_IF/oncostatin"/>
</dbReference>
<dbReference type="InterPro" id="IPR019827">
    <property type="entry name" value="Leukemia_IF/oncostatin_CS"/>
</dbReference>
<dbReference type="PANTHER" id="PTHR10633">
    <property type="entry name" value="LEUKEMIA INHIBITORY FACTOR"/>
    <property type="match status" value="1"/>
</dbReference>
<dbReference type="PANTHER" id="PTHR10633:SF0">
    <property type="entry name" value="LEUKEMIA INHIBITORY FACTOR"/>
    <property type="match status" value="1"/>
</dbReference>
<dbReference type="Pfam" id="PF01291">
    <property type="entry name" value="LIF_OSM"/>
    <property type="match status" value="1"/>
</dbReference>
<dbReference type="PRINTS" id="PR01883">
    <property type="entry name" value="LEUKAEMIAIF"/>
</dbReference>
<dbReference type="SMART" id="SM00080">
    <property type="entry name" value="LIF_OSM"/>
    <property type="match status" value="1"/>
</dbReference>
<dbReference type="SUPFAM" id="SSF47266">
    <property type="entry name" value="4-helical cytokines"/>
    <property type="match status" value="1"/>
</dbReference>
<dbReference type="PROSITE" id="PS00590">
    <property type="entry name" value="LIF_OSM"/>
    <property type="match status" value="1"/>
</dbReference>
<proteinExistence type="evidence at transcript level"/>
<protein>
    <recommendedName>
        <fullName>Leukemia inhibitory factor</fullName>
        <shortName>LIF</shortName>
    </recommendedName>
</protein>
<accession>O62728</accession>
<organism>
    <name type="scientific">Neovison vison</name>
    <name type="common">American mink</name>
    <name type="synonym">Mustela vison</name>
    <dbReference type="NCBI Taxonomy" id="452646"/>
    <lineage>
        <taxon>Eukaryota</taxon>
        <taxon>Metazoa</taxon>
        <taxon>Chordata</taxon>
        <taxon>Craniata</taxon>
        <taxon>Vertebrata</taxon>
        <taxon>Euteleostomi</taxon>
        <taxon>Mammalia</taxon>
        <taxon>Eutheria</taxon>
        <taxon>Laurasiatheria</taxon>
        <taxon>Carnivora</taxon>
        <taxon>Caniformia</taxon>
        <taxon>Musteloidea</taxon>
        <taxon>Mustelidae</taxon>
        <taxon>Mustelinae</taxon>
        <taxon>Neogale</taxon>
    </lineage>
</organism>
<gene>
    <name type="primary">LIF</name>
</gene>
<comment type="function">
    <text evidence="1">LIF has the capacity to induce terminal differentiation in leukemic cells. Its activities include the induction of hematopoietic differentiation in normal and myeloid leukemia cells, the induction of neuronal cell differentiation, and the stimulation of acute-phase protein synthesis in hepatocytes (By similarity).</text>
</comment>
<comment type="subcellular location">
    <subcellularLocation>
        <location>Secreted</location>
    </subcellularLocation>
</comment>
<comment type="similarity">
    <text evidence="3">Belongs to the LIF/OSM family.</text>
</comment>
<reference key="1">
    <citation type="journal article" date="1998" name="Mol. Reprod. Dev.">
        <title>Cloning of leukemia inhibitory factor (LIF) and its expression in the uterus during embryonic diapause and implantation in the mink (Mustela vison).</title>
        <authorList>
            <person name="Song J.H."/>
            <person name="Houde A."/>
            <person name="Murphy B.D."/>
        </authorList>
    </citation>
    <scope>NUCLEOTIDE SEQUENCE [MRNA]</scope>
    <source>
        <tissue>Endometrium</tissue>
    </source>
</reference>
<feature type="signal peptide" evidence="1">
    <location>
        <begin position="1"/>
        <end position="22"/>
    </location>
</feature>
<feature type="chain" id="PRO_0000017717" description="Leukemia inhibitory factor">
    <location>
        <begin position="23"/>
        <end position="202"/>
    </location>
</feature>
<feature type="glycosylation site" description="N-linked (GlcNAc...) asparagine" evidence="2">
    <location>
        <position position="31"/>
    </location>
</feature>
<feature type="glycosylation site" description="N-linked (GlcNAc...) asparagine" evidence="2">
    <location>
        <position position="56"/>
    </location>
</feature>
<feature type="glycosylation site" description="N-linked (GlcNAc...) asparagine" evidence="2">
    <location>
        <position position="85"/>
    </location>
</feature>
<feature type="glycosylation site" description="N-linked (GlcNAc...) asparagine" evidence="2">
    <location>
        <position position="95"/>
    </location>
</feature>
<feature type="glycosylation site" description="N-linked (GlcNAc...) asparagine" evidence="2">
    <location>
        <position position="118"/>
    </location>
</feature>
<feature type="disulfide bond" evidence="1">
    <location>
        <begin position="34"/>
        <end position="156"/>
    </location>
</feature>
<feature type="disulfide bond" evidence="1">
    <location>
        <begin position="40"/>
        <end position="153"/>
    </location>
</feature>
<feature type="disulfide bond" evidence="1">
    <location>
        <begin position="82"/>
        <end position="185"/>
    </location>
</feature>